<protein>
    <recommendedName>
        <fullName>dTDP-4-amino-4,6-dideoxy-D-glucose transaminase</fullName>
        <ecNumber>2.6.1.33</ecNumber>
    </recommendedName>
</protein>
<sequence>MNDKTIPVTQPSLPELAEFMPYLEKIWKNKWLTNNGPFHQELEEKLCEFLGVQHISLFNNATIALITALQALRITGEVITTPYSFVATSHAILWNGLTPVFVDIENDGYNIDYRKIEQAITPKTSAILPVHCYSTPCEVEEIQKIADNYGLKVIYDAAHAFGVNFKGGKVYLTMVIYQFLVSMRRKSSINFEGGAIISPDAKTKLRIDRLKNFGIADELTVTAPGINGKMSEINAAFGLVQLKHIEGSISKRKIIDSLYRNLLKGTPGITIFPGNINTNSNYSYFPILIDDGFHMSRDQAYELLKKNNILSRKYFYPLISNMPMYRGLISASVDNLPIANSVADKVLCLPIYTDLNEEIVVKITKLLLGKM</sequence>
<gene>
    <name type="primary">vioA</name>
</gene>
<keyword id="KW-0032">Aminotransferase</keyword>
<keyword id="KW-0448">Lipopolysaccharide biosynthesis</keyword>
<keyword id="KW-0663">Pyridoxal phosphate</keyword>
<keyword id="KW-0808">Transferase</keyword>
<name>VIOA_ECOLX</name>
<reference key="1">
    <citation type="journal article" date="1999" name="Microbiology">
        <title>Genetic organization of the O7-specific lipopolysaccharide biosynthesis cluster of Escherichia coli VW187 (O7:K1).</title>
        <authorList>
            <person name="Marolda C.L."/>
            <person name="Feldman M.F."/>
            <person name="Valvano M.A."/>
        </authorList>
    </citation>
    <scope>NUCLEOTIDE SEQUENCE [GENOMIC DNA]</scope>
    <scope>GENE NAME</scope>
    <source>
        <strain>O7:K1 / VW187</strain>
    </source>
</reference>
<reference key="2">
    <citation type="journal article" date="2007" name="J. Bacteriol.">
        <title>Biochemical characterization of dTDP-D-Qui4N and dTDP-D-Qui4NAc biosynthetic pathways in Shigella dysenteriae type 7 and Escherichia coli O7.</title>
        <authorList>
            <person name="Wang Y."/>
            <person name="Xu Y."/>
            <person name="Perepelov A.V."/>
            <person name="Qi Y."/>
            <person name="Knirel Y.A."/>
            <person name="Wang L."/>
            <person name="Feng L."/>
        </authorList>
    </citation>
    <scope>FUNCTION</scope>
    <scope>CATALYTIC ACTIVITY</scope>
    <scope>COFACTOR</scope>
    <scope>BIOPHYSICOCHEMICAL PROPERTIES</scope>
    <scope>PATHWAY</scope>
    <source>
        <strain>O7 / G1112</strain>
    </source>
</reference>
<proteinExistence type="evidence at protein level"/>
<comment type="function">
    <text evidence="2">Catalyzes the conversion of dTDP-4-dehydro-6-deoxy-D-glucose (dTDP-D-Glc4O) to dTDP-4-amino-4,6-dideoxy-D-glucose (dTDP-D-Qui4N).</text>
</comment>
<comment type="catalytic activity">
    <reaction evidence="2">
        <text>dTDP-4-amino-4,6-dideoxy-D-glucose + 2-oxoglutarate = dTDP-4-dehydro-6-deoxy-alpha-D-glucose + L-glutamate</text>
        <dbReference type="Rhea" id="RHEA:19085"/>
        <dbReference type="ChEBI" id="CHEBI:16810"/>
        <dbReference type="ChEBI" id="CHEBI:29985"/>
        <dbReference type="ChEBI" id="CHEBI:57582"/>
        <dbReference type="ChEBI" id="CHEBI:57649"/>
        <dbReference type="EC" id="2.6.1.33"/>
    </reaction>
</comment>
<comment type="cofactor">
    <cofactor evidence="2">
        <name>pyridoxal 5'-phosphate</name>
        <dbReference type="ChEBI" id="CHEBI:597326"/>
    </cofactor>
</comment>
<comment type="biophysicochemical properties">
    <kinetics>
        <KM evidence="2">45.8 uM for dTDP-D-Glc4O</KM>
    </kinetics>
</comment>
<comment type="pathway">
    <text evidence="2">Bacterial outer membrane biogenesis; lipopolysaccharide biosynthesis.</text>
</comment>
<comment type="similarity">
    <text evidence="3">Belongs to the DegT/DnrJ/EryC1 family.</text>
</comment>
<evidence type="ECO:0000250" key="1"/>
<evidence type="ECO:0000269" key="2">
    <source>
    </source>
</evidence>
<evidence type="ECO:0000305" key="3"/>
<organism>
    <name type="scientific">Escherichia coli</name>
    <dbReference type="NCBI Taxonomy" id="562"/>
    <lineage>
        <taxon>Bacteria</taxon>
        <taxon>Pseudomonadati</taxon>
        <taxon>Pseudomonadota</taxon>
        <taxon>Gammaproteobacteria</taxon>
        <taxon>Enterobacterales</taxon>
        <taxon>Enterobacteriaceae</taxon>
        <taxon>Escherichia</taxon>
    </lineage>
</organism>
<accession>Q9XCW4</accession>
<dbReference type="EC" id="2.6.1.33"/>
<dbReference type="EMBL" id="AF125322">
    <property type="protein sequence ID" value="AAD44154.1"/>
    <property type="molecule type" value="Genomic_DNA"/>
</dbReference>
<dbReference type="SMR" id="Q9XCW4"/>
<dbReference type="KEGG" id="ag:AAD44154"/>
<dbReference type="BioCyc" id="MetaCyc:MONOMER-18136"/>
<dbReference type="SABIO-RK" id="Q9XCW4"/>
<dbReference type="UniPathway" id="UPA00030"/>
<dbReference type="GO" id="GO:0019179">
    <property type="term" value="F:dTDP-4-amino-4,6-dideoxy-D-glucose transaminase activity"/>
    <property type="evidence" value="ECO:0007669"/>
    <property type="project" value="UniProtKB-EC"/>
</dbReference>
<dbReference type="GO" id="GO:0030170">
    <property type="term" value="F:pyridoxal phosphate binding"/>
    <property type="evidence" value="ECO:0007669"/>
    <property type="project" value="TreeGrafter"/>
</dbReference>
<dbReference type="GO" id="GO:0009103">
    <property type="term" value="P:lipopolysaccharide biosynthetic process"/>
    <property type="evidence" value="ECO:0007669"/>
    <property type="project" value="UniProtKB-UniPathway"/>
</dbReference>
<dbReference type="CDD" id="cd00616">
    <property type="entry name" value="AHBA_syn"/>
    <property type="match status" value="1"/>
</dbReference>
<dbReference type="Gene3D" id="3.40.640.10">
    <property type="entry name" value="Type I PLP-dependent aspartate aminotransferase-like (Major domain)"/>
    <property type="match status" value="1"/>
</dbReference>
<dbReference type="InterPro" id="IPR000653">
    <property type="entry name" value="DegT/StrS_aminotransferase"/>
</dbReference>
<dbReference type="InterPro" id="IPR015424">
    <property type="entry name" value="PyrdxlP-dep_Trfase"/>
</dbReference>
<dbReference type="InterPro" id="IPR015421">
    <property type="entry name" value="PyrdxlP-dep_Trfase_major"/>
</dbReference>
<dbReference type="PANTHER" id="PTHR30244:SF9">
    <property type="entry name" value="PROTEIN RV3402C"/>
    <property type="match status" value="1"/>
</dbReference>
<dbReference type="PANTHER" id="PTHR30244">
    <property type="entry name" value="TRANSAMINASE"/>
    <property type="match status" value="1"/>
</dbReference>
<dbReference type="Pfam" id="PF01041">
    <property type="entry name" value="DegT_DnrJ_EryC1"/>
    <property type="match status" value="1"/>
</dbReference>
<dbReference type="PIRSF" id="PIRSF000390">
    <property type="entry name" value="PLP_StrS"/>
    <property type="match status" value="1"/>
</dbReference>
<dbReference type="SUPFAM" id="SSF53383">
    <property type="entry name" value="PLP-dependent transferases"/>
    <property type="match status" value="1"/>
</dbReference>
<feature type="chain" id="PRO_0000424154" description="dTDP-4-amino-4,6-dideoxy-D-glucose transaminase">
    <location>
        <begin position="1"/>
        <end position="371"/>
    </location>
</feature>
<feature type="modified residue" description="N6-(pyridoxal phosphate)lysine" evidence="1">
    <location>
        <position position="186"/>
    </location>
</feature>